<organism>
    <name type="scientific">Brucella melitensis biotype 1 (strain ATCC 23456 / CCUG 17765 / NCTC 10094 / 16M)</name>
    <dbReference type="NCBI Taxonomy" id="224914"/>
    <lineage>
        <taxon>Bacteria</taxon>
        <taxon>Pseudomonadati</taxon>
        <taxon>Pseudomonadota</taxon>
        <taxon>Alphaproteobacteria</taxon>
        <taxon>Hyphomicrobiales</taxon>
        <taxon>Brucellaceae</taxon>
        <taxon>Brucella/Ochrobactrum group</taxon>
        <taxon>Brucella</taxon>
    </lineage>
</organism>
<keyword id="KW-0169">Cobalamin biosynthesis</keyword>
<keyword id="KW-0315">Glutamine amidotransferase</keyword>
<evidence type="ECO:0000255" key="1">
    <source>
        <dbReference type="HAMAP-Rule" id="MF_00028"/>
    </source>
</evidence>
<evidence type="ECO:0000305" key="2"/>
<accession>Q8YHV6</accession>
<feature type="chain" id="PRO_0000141290" description="Cobyric acid synthase">
    <location>
        <begin position="1"/>
        <end position="483"/>
    </location>
</feature>
<feature type="domain" description="GATase cobBQ-type" evidence="1">
    <location>
        <begin position="251"/>
        <end position="438"/>
    </location>
</feature>
<feature type="active site" description="Nucleophile" evidence="1">
    <location>
        <position position="333"/>
    </location>
</feature>
<feature type="active site" evidence="1">
    <location>
        <position position="430"/>
    </location>
</feature>
<reference key="1">
    <citation type="journal article" date="2002" name="Proc. Natl. Acad. Sci. U.S.A.">
        <title>The genome sequence of the facultative intracellular pathogen Brucella melitensis.</title>
        <authorList>
            <person name="DelVecchio V.G."/>
            <person name="Kapatral V."/>
            <person name="Redkar R.J."/>
            <person name="Patra G."/>
            <person name="Mujer C."/>
            <person name="Los T."/>
            <person name="Ivanova N."/>
            <person name="Anderson I."/>
            <person name="Bhattacharyya A."/>
            <person name="Lykidis A."/>
            <person name="Reznik G."/>
            <person name="Jablonski L."/>
            <person name="Larsen N."/>
            <person name="D'Souza M."/>
            <person name="Bernal A."/>
            <person name="Mazur M."/>
            <person name="Goltsman E."/>
            <person name="Selkov E."/>
            <person name="Elzer P.H."/>
            <person name="Hagius S."/>
            <person name="O'Callaghan D."/>
            <person name="Letesson J.-J."/>
            <person name="Haselkorn R."/>
            <person name="Kyrpides N.C."/>
            <person name="Overbeek R."/>
        </authorList>
    </citation>
    <scope>NUCLEOTIDE SEQUENCE [LARGE SCALE GENOMIC DNA]</scope>
    <source>
        <strain>ATCC 23456 / CCUG 17765 / NCTC 10094 / 16M</strain>
    </source>
</reference>
<name>COBQ_BRUME</name>
<comment type="function">
    <text evidence="1">Catalyzes amidations at positions B, D, E, and G on adenosylcobyrinic A,C-diamide. NH(2) groups are provided by glutamine, and one molecule of ATP is hydrogenolyzed for each amidation.</text>
</comment>
<comment type="pathway">
    <text evidence="1">Cofactor biosynthesis; adenosylcobalamin biosynthesis.</text>
</comment>
<comment type="similarity">
    <text evidence="1">Belongs to the CobB/CobQ family. CobQ subfamily.</text>
</comment>
<comment type="sequence caution" evidence="2">
    <conflict type="erroneous initiation">
        <sequence resource="EMBL-CDS" id="AAL51871"/>
    </conflict>
</comment>
<sequence>MARAIMFQGTGSDVGKSVLVAGLCRVARNRGLKVRPFKPQNMSNNAAVSDDGGEIGRAQWLQALACGVPSSVHMNPVLLKPQTDMGSQLIVQGQVRGEARGRYYQELKPQLMAAVMESFAKVGDGADLVLVEGAGSPAEINLRAGDIANMGFATHADVPVVLVGDIDRGGVIASLVGTHTILPQEDRAMVRGFLINKFRGDISLFDDSLAAITRFTGWRSFGVVPWLKAVSRLPAEDSVVLERAVRGDKKALIVAVPMLPRIANFDDLDPLKAEPAVEVVMVPPGSSLPADAGLVVLPGTKSTIADLLALRENGWDRELVAHVKRGGHVLGICGGFQMLGRRISDPAGIEGNVRDIEGLGLLDIETMTEPEKVVRNVEAVSLLHDEPLEGYEIHIGRTSGPDMARPFARIGDHDDGAVSPDGRIMGTYLHGVFSADRFRHHFLRALGVEGGQMNYRESVEEALGELAEGLEASLDIDGLFALA</sequence>
<dbReference type="EMBL" id="AE008917">
    <property type="protein sequence ID" value="AAL51871.1"/>
    <property type="status" value="ALT_INIT"/>
    <property type="molecule type" value="Genomic_DNA"/>
</dbReference>
<dbReference type="PIR" id="AD3338">
    <property type="entry name" value="AD3338"/>
</dbReference>
<dbReference type="RefSeq" id="WP_004683961.1">
    <property type="nucleotide sequence ID" value="NZ_GG703780.1"/>
</dbReference>
<dbReference type="SMR" id="Q8YHV6"/>
<dbReference type="GeneID" id="29593476"/>
<dbReference type="KEGG" id="bme:BMEI0690"/>
<dbReference type="KEGG" id="bmel:DK63_738"/>
<dbReference type="PATRIC" id="fig|224914.52.peg.771"/>
<dbReference type="eggNOG" id="COG1492">
    <property type="taxonomic scope" value="Bacteria"/>
</dbReference>
<dbReference type="PhylomeDB" id="Q8YHV6"/>
<dbReference type="UniPathway" id="UPA00148"/>
<dbReference type="Proteomes" id="UP000000419">
    <property type="component" value="Chromosome I"/>
</dbReference>
<dbReference type="GO" id="GO:0015420">
    <property type="term" value="F:ABC-type vitamin B12 transporter activity"/>
    <property type="evidence" value="ECO:0007669"/>
    <property type="project" value="UniProtKB-UniRule"/>
</dbReference>
<dbReference type="GO" id="GO:0003824">
    <property type="term" value="F:catalytic activity"/>
    <property type="evidence" value="ECO:0007669"/>
    <property type="project" value="InterPro"/>
</dbReference>
<dbReference type="GO" id="GO:0009236">
    <property type="term" value="P:cobalamin biosynthetic process"/>
    <property type="evidence" value="ECO:0007669"/>
    <property type="project" value="UniProtKB-UniRule"/>
</dbReference>
<dbReference type="CDD" id="cd05389">
    <property type="entry name" value="CobQ_N"/>
    <property type="match status" value="1"/>
</dbReference>
<dbReference type="CDD" id="cd01750">
    <property type="entry name" value="GATase1_CobQ"/>
    <property type="match status" value="1"/>
</dbReference>
<dbReference type="Gene3D" id="3.40.50.880">
    <property type="match status" value="1"/>
</dbReference>
<dbReference type="Gene3D" id="3.40.50.300">
    <property type="entry name" value="P-loop containing nucleotide triphosphate hydrolases"/>
    <property type="match status" value="1"/>
</dbReference>
<dbReference type="HAMAP" id="MF_00028">
    <property type="entry name" value="CobQ"/>
    <property type="match status" value="1"/>
</dbReference>
<dbReference type="InterPro" id="IPR029062">
    <property type="entry name" value="Class_I_gatase-like"/>
</dbReference>
<dbReference type="InterPro" id="IPR002586">
    <property type="entry name" value="CobQ/CobB/MinD/ParA_Nub-bd_dom"/>
</dbReference>
<dbReference type="InterPro" id="IPR033949">
    <property type="entry name" value="CobQ_GATase1"/>
</dbReference>
<dbReference type="InterPro" id="IPR047045">
    <property type="entry name" value="CobQ_N"/>
</dbReference>
<dbReference type="InterPro" id="IPR004459">
    <property type="entry name" value="CobQ_synth"/>
</dbReference>
<dbReference type="InterPro" id="IPR011698">
    <property type="entry name" value="GATase_3"/>
</dbReference>
<dbReference type="InterPro" id="IPR027417">
    <property type="entry name" value="P-loop_NTPase"/>
</dbReference>
<dbReference type="NCBIfam" id="TIGR00313">
    <property type="entry name" value="cobQ"/>
    <property type="match status" value="1"/>
</dbReference>
<dbReference type="NCBIfam" id="NF001989">
    <property type="entry name" value="PRK00784.1"/>
    <property type="match status" value="1"/>
</dbReference>
<dbReference type="PANTHER" id="PTHR21343:SF1">
    <property type="entry name" value="COBYRIC ACID SYNTHASE"/>
    <property type="match status" value="1"/>
</dbReference>
<dbReference type="PANTHER" id="PTHR21343">
    <property type="entry name" value="DETHIOBIOTIN SYNTHETASE"/>
    <property type="match status" value="1"/>
</dbReference>
<dbReference type="Pfam" id="PF01656">
    <property type="entry name" value="CbiA"/>
    <property type="match status" value="1"/>
</dbReference>
<dbReference type="Pfam" id="PF07685">
    <property type="entry name" value="GATase_3"/>
    <property type="match status" value="1"/>
</dbReference>
<dbReference type="SUPFAM" id="SSF52317">
    <property type="entry name" value="Class I glutamine amidotransferase-like"/>
    <property type="match status" value="1"/>
</dbReference>
<dbReference type="SUPFAM" id="SSF52540">
    <property type="entry name" value="P-loop containing nucleoside triphosphate hydrolases"/>
    <property type="match status" value="1"/>
</dbReference>
<dbReference type="PROSITE" id="PS51274">
    <property type="entry name" value="GATASE_COBBQ"/>
    <property type="match status" value="1"/>
</dbReference>
<proteinExistence type="inferred from homology"/>
<gene>
    <name evidence="1" type="primary">cobQ</name>
    <name type="ordered locus">BMEI0690</name>
</gene>
<protein>
    <recommendedName>
        <fullName evidence="1">Cobyric acid synthase</fullName>
    </recommendedName>
</protein>